<protein>
    <recommendedName>
        <fullName evidence="1">CTP synthase</fullName>
        <ecNumber evidence="1">6.3.4.2</ecNumber>
    </recommendedName>
    <alternativeName>
        <fullName evidence="1">Cytidine 5'-triphosphate synthase</fullName>
    </alternativeName>
    <alternativeName>
        <fullName evidence="1">Cytidine triphosphate synthetase</fullName>
        <shortName evidence="1">CTP synthetase</shortName>
        <shortName evidence="1">CTPS</shortName>
    </alternativeName>
    <alternativeName>
        <fullName evidence="1">UTP--ammonia ligase</fullName>
    </alternativeName>
</protein>
<sequence length="542" mass="59852">MARYVFITGGVVSSLGKGIAAAALGALLQARGYRVRLRKLDPYLNVDPGTMSPTQHGEVFVTDDGAETDLDLGHYERFTGRSATKTDNITTGRIYKNIIDKERRGDYLGATVQVIPHVTNEIKDFVIEGNDDYDFVICEIGGTVGDIEAMPFMEAIRQLGNDLPRGTAVYVHLTLMPYIPAAGELKTKPTQHSVKELQALGIHPDILLVRADREIPEAERRKLSLFCNVRPSAVIQALDVANIYDVPIAYHKEGLDDEVLAAFGIEPAPKPRLDPWEEVCNRIRTPEGEVTIAIVGKYTGLKDAYKSLIEALHHGGIANRVKVKLEWIESEVFEKEDPAPYLEKVHGILVPGGFGERGSEGKIHAARFARERKVPYFGICFGMQMAVIEAARNLADVSGASSTEFGPTKEPVVGLMTEWVKGNELQKRTAAGDLGGTMRLGAYKAALKKGTKISDIYGSTDISERHRHRYEVNVDYKDRLESCGLVFSGMSPDGVLPETIEYPDHPWFIGVQYHPELKSRPLDPHPLFASFIEAATEQSRLV</sequence>
<organism>
    <name type="scientific">Rhizobium leguminosarum bv. trifolii (strain WSM2304)</name>
    <dbReference type="NCBI Taxonomy" id="395492"/>
    <lineage>
        <taxon>Bacteria</taxon>
        <taxon>Pseudomonadati</taxon>
        <taxon>Pseudomonadota</taxon>
        <taxon>Alphaproteobacteria</taxon>
        <taxon>Hyphomicrobiales</taxon>
        <taxon>Rhizobiaceae</taxon>
        <taxon>Rhizobium/Agrobacterium group</taxon>
        <taxon>Rhizobium</taxon>
    </lineage>
</organism>
<keyword id="KW-0067">ATP-binding</keyword>
<keyword id="KW-0315">Glutamine amidotransferase</keyword>
<keyword id="KW-0436">Ligase</keyword>
<keyword id="KW-0460">Magnesium</keyword>
<keyword id="KW-0479">Metal-binding</keyword>
<keyword id="KW-0547">Nucleotide-binding</keyword>
<keyword id="KW-0665">Pyrimidine biosynthesis</keyword>
<keyword id="KW-1185">Reference proteome</keyword>
<proteinExistence type="inferred from homology"/>
<accession>B5ZPZ7</accession>
<feature type="chain" id="PRO_1000139545" description="CTP synthase">
    <location>
        <begin position="1"/>
        <end position="542"/>
    </location>
</feature>
<feature type="domain" description="Glutamine amidotransferase type-1" evidence="1">
    <location>
        <begin position="291"/>
        <end position="541"/>
    </location>
</feature>
<feature type="region of interest" description="Amidoligase domain" evidence="1">
    <location>
        <begin position="1"/>
        <end position="265"/>
    </location>
</feature>
<feature type="active site" description="Nucleophile; for glutamine hydrolysis" evidence="1">
    <location>
        <position position="380"/>
    </location>
</feature>
<feature type="active site" evidence="1">
    <location>
        <position position="514"/>
    </location>
</feature>
<feature type="active site" evidence="1">
    <location>
        <position position="516"/>
    </location>
</feature>
<feature type="binding site" evidence="1">
    <location>
        <position position="13"/>
    </location>
    <ligand>
        <name>CTP</name>
        <dbReference type="ChEBI" id="CHEBI:37563"/>
        <note>allosteric inhibitor</note>
    </ligand>
</feature>
<feature type="binding site" evidence="1">
    <location>
        <position position="13"/>
    </location>
    <ligand>
        <name>UTP</name>
        <dbReference type="ChEBI" id="CHEBI:46398"/>
    </ligand>
</feature>
<feature type="binding site" evidence="1">
    <location>
        <begin position="14"/>
        <end position="19"/>
    </location>
    <ligand>
        <name>ATP</name>
        <dbReference type="ChEBI" id="CHEBI:30616"/>
    </ligand>
</feature>
<feature type="binding site" evidence="1">
    <location>
        <position position="71"/>
    </location>
    <ligand>
        <name>ATP</name>
        <dbReference type="ChEBI" id="CHEBI:30616"/>
    </ligand>
</feature>
<feature type="binding site" evidence="1">
    <location>
        <position position="71"/>
    </location>
    <ligand>
        <name>Mg(2+)</name>
        <dbReference type="ChEBI" id="CHEBI:18420"/>
    </ligand>
</feature>
<feature type="binding site" evidence="1">
    <location>
        <position position="139"/>
    </location>
    <ligand>
        <name>Mg(2+)</name>
        <dbReference type="ChEBI" id="CHEBI:18420"/>
    </ligand>
</feature>
<feature type="binding site" evidence="1">
    <location>
        <begin position="146"/>
        <end position="148"/>
    </location>
    <ligand>
        <name>CTP</name>
        <dbReference type="ChEBI" id="CHEBI:37563"/>
        <note>allosteric inhibitor</note>
    </ligand>
</feature>
<feature type="binding site" evidence="1">
    <location>
        <begin position="186"/>
        <end position="191"/>
    </location>
    <ligand>
        <name>CTP</name>
        <dbReference type="ChEBI" id="CHEBI:37563"/>
        <note>allosteric inhibitor</note>
    </ligand>
</feature>
<feature type="binding site" evidence="1">
    <location>
        <begin position="186"/>
        <end position="191"/>
    </location>
    <ligand>
        <name>UTP</name>
        <dbReference type="ChEBI" id="CHEBI:46398"/>
    </ligand>
</feature>
<feature type="binding site" evidence="1">
    <location>
        <position position="222"/>
    </location>
    <ligand>
        <name>CTP</name>
        <dbReference type="ChEBI" id="CHEBI:37563"/>
        <note>allosteric inhibitor</note>
    </ligand>
</feature>
<feature type="binding site" evidence="1">
    <location>
        <position position="222"/>
    </location>
    <ligand>
        <name>UTP</name>
        <dbReference type="ChEBI" id="CHEBI:46398"/>
    </ligand>
</feature>
<feature type="binding site" evidence="1">
    <location>
        <position position="353"/>
    </location>
    <ligand>
        <name>L-glutamine</name>
        <dbReference type="ChEBI" id="CHEBI:58359"/>
    </ligand>
</feature>
<feature type="binding site" evidence="1">
    <location>
        <begin position="381"/>
        <end position="384"/>
    </location>
    <ligand>
        <name>L-glutamine</name>
        <dbReference type="ChEBI" id="CHEBI:58359"/>
    </ligand>
</feature>
<feature type="binding site" evidence="1">
    <location>
        <position position="404"/>
    </location>
    <ligand>
        <name>L-glutamine</name>
        <dbReference type="ChEBI" id="CHEBI:58359"/>
    </ligand>
</feature>
<feature type="binding site" evidence="1">
    <location>
        <position position="469"/>
    </location>
    <ligand>
        <name>L-glutamine</name>
        <dbReference type="ChEBI" id="CHEBI:58359"/>
    </ligand>
</feature>
<gene>
    <name evidence="1" type="primary">pyrG</name>
    <name type="ordered locus">Rleg2_1832</name>
</gene>
<dbReference type="EC" id="6.3.4.2" evidence="1"/>
<dbReference type="EMBL" id="CP001191">
    <property type="protein sequence ID" value="ACI55117.1"/>
    <property type="molecule type" value="Genomic_DNA"/>
</dbReference>
<dbReference type="RefSeq" id="WP_012557733.1">
    <property type="nucleotide sequence ID" value="NC_011369.1"/>
</dbReference>
<dbReference type="SMR" id="B5ZPZ7"/>
<dbReference type="STRING" id="395492.Rleg2_1832"/>
<dbReference type="KEGG" id="rlt:Rleg2_1832"/>
<dbReference type="eggNOG" id="COG0504">
    <property type="taxonomic scope" value="Bacteria"/>
</dbReference>
<dbReference type="HOGENOM" id="CLU_011675_5_0_5"/>
<dbReference type="UniPathway" id="UPA00159">
    <property type="reaction ID" value="UER00277"/>
</dbReference>
<dbReference type="Proteomes" id="UP000008330">
    <property type="component" value="Chromosome"/>
</dbReference>
<dbReference type="GO" id="GO:0005829">
    <property type="term" value="C:cytosol"/>
    <property type="evidence" value="ECO:0007669"/>
    <property type="project" value="TreeGrafter"/>
</dbReference>
<dbReference type="GO" id="GO:0005524">
    <property type="term" value="F:ATP binding"/>
    <property type="evidence" value="ECO:0007669"/>
    <property type="project" value="UniProtKB-KW"/>
</dbReference>
<dbReference type="GO" id="GO:0003883">
    <property type="term" value="F:CTP synthase activity"/>
    <property type="evidence" value="ECO:0007669"/>
    <property type="project" value="UniProtKB-UniRule"/>
</dbReference>
<dbReference type="GO" id="GO:0004359">
    <property type="term" value="F:glutaminase activity"/>
    <property type="evidence" value="ECO:0007669"/>
    <property type="project" value="RHEA"/>
</dbReference>
<dbReference type="GO" id="GO:0042802">
    <property type="term" value="F:identical protein binding"/>
    <property type="evidence" value="ECO:0007669"/>
    <property type="project" value="TreeGrafter"/>
</dbReference>
<dbReference type="GO" id="GO:0046872">
    <property type="term" value="F:metal ion binding"/>
    <property type="evidence" value="ECO:0007669"/>
    <property type="project" value="UniProtKB-KW"/>
</dbReference>
<dbReference type="GO" id="GO:0044210">
    <property type="term" value="P:'de novo' CTP biosynthetic process"/>
    <property type="evidence" value="ECO:0007669"/>
    <property type="project" value="UniProtKB-UniRule"/>
</dbReference>
<dbReference type="GO" id="GO:0019856">
    <property type="term" value="P:pyrimidine nucleobase biosynthetic process"/>
    <property type="evidence" value="ECO:0007669"/>
    <property type="project" value="TreeGrafter"/>
</dbReference>
<dbReference type="CDD" id="cd03113">
    <property type="entry name" value="CTPS_N"/>
    <property type="match status" value="1"/>
</dbReference>
<dbReference type="CDD" id="cd01746">
    <property type="entry name" value="GATase1_CTP_Synthase"/>
    <property type="match status" value="1"/>
</dbReference>
<dbReference type="FunFam" id="3.40.50.300:FF:000009">
    <property type="entry name" value="CTP synthase"/>
    <property type="match status" value="1"/>
</dbReference>
<dbReference type="FunFam" id="3.40.50.880:FF:000002">
    <property type="entry name" value="CTP synthase"/>
    <property type="match status" value="1"/>
</dbReference>
<dbReference type="Gene3D" id="3.40.50.880">
    <property type="match status" value="1"/>
</dbReference>
<dbReference type="Gene3D" id="3.40.50.300">
    <property type="entry name" value="P-loop containing nucleotide triphosphate hydrolases"/>
    <property type="match status" value="1"/>
</dbReference>
<dbReference type="HAMAP" id="MF_01227">
    <property type="entry name" value="PyrG"/>
    <property type="match status" value="1"/>
</dbReference>
<dbReference type="InterPro" id="IPR029062">
    <property type="entry name" value="Class_I_gatase-like"/>
</dbReference>
<dbReference type="InterPro" id="IPR004468">
    <property type="entry name" value="CTP_synthase"/>
</dbReference>
<dbReference type="InterPro" id="IPR017456">
    <property type="entry name" value="CTP_synthase_N"/>
</dbReference>
<dbReference type="InterPro" id="IPR017926">
    <property type="entry name" value="GATASE"/>
</dbReference>
<dbReference type="InterPro" id="IPR033828">
    <property type="entry name" value="GATase1_CTP_Synthase"/>
</dbReference>
<dbReference type="InterPro" id="IPR027417">
    <property type="entry name" value="P-loop_NTPase"/>
</dbReference>
<dbReference type="NCBIfam" id="NF003792">
    <property type="entry name" value="PRK05380.1"/>
    <property type="match status" value="1"/>
</dbReference>
<dbReference type="NCBIfam" id="TIGR00337">
    <property type="entry name" value="PyrG"/>
    <property type="match status" value="1"/>
</dbReference>
<dbReference type="PANTHER" id="PTHR11550">
    <property type="entry name" value="CTP SYNTHASE"/>
    <property type="match status" value="1"/>
</dbReference>
<dbReference type="PANTHER" id="PTHR11550:SF0">
    <property type="entry name" value="CTP SYNTHASE-RELATED"/>
    <property type="match status" value="1"/>
</dbReference>
<dbReference type="Pfam" id="PF06418">
    <property type="entry name" value="CTP_synth_N"/>
    <property type="match status" value="1"/>
</dbReference>
<dbReference type="Pfam" id="PF00117">
    <property type="entry name" value="GATase"/>
    <property type="match status" value="1"/>
</dbReference>
<dbReference type="SUPFAM" id="SSF52317">
    <property type="entry name" value="Class I glutamine amidotransferase-like"/>
    <property type="match status" value="1"/>
</dbReference>
<dbReference type="SUPFAM" id="SSF52540">
    <property type="entry name" value="P-loop containing nucleoside triphosphate hydrolases"/>
    <property type="match status" value="1"/>
</dbReference>
<dbReference type="PROSITE" id="PS51273">
    <property type="entry name" value="GATASE_TYPE_1"/>
    <property type="match status" value="1"/>
</dbReference>
<comment type="function">
    <text evidence="1">Catalyzes the ATP-dependent amination of UTP to CTP with either L-glutamine or ammonia as the source of nitrogen. Regulates intracellular CTP levels through interactions with the four ribonucleotide triphosphates.</text>
</comment>
<comment type="catalytic activity">
    <reaction evidence="1">
        <text>UTP + L-glutamine + ATP + H2O = CTP + L-glutamate + ADP + phosphate + 2 H(+)</text>
        <dbReference type="Rhea" id="RHEA:26426"/>
        <dbReference type="ChEBI" id="CHEBI:15377"/>
        <dbReference type="ChEBI" id="CHEBI:15378"/>
        <dbReference type="ChEBI" id="CHEBI:29985"/>
        <dbReference type="ChEBI" id="CHEBI:30616"/>
        <dbReference type="ChEBI" id="CHEBI:37563"/>
        <dbReference type="ChEBI" id="CHEBI:43474"/>
        <dbReference type="ChEBI" id="CHEBI:46398"/>
        <dbReference type="ChEBI" id="CHEBI:58359"/>
        <dbReference type="ChEBI" id="CHEBI:456216"/>
        <dbReference type="EC" id="6.3.4.2"/>
    </reaction>
</comment>
<comment type="catalytic activity">
    <reaction evidence="1">
        <text>L-glutamine + H2O = L-glutamate + NH4(+)</text>
        <dbReference type="Rhea" id="RHEA:15889"/>
        <dbReference type="ChEBI" id="CHEBI:15377"/>
        <dbReference type="ChEBI" id="CHEBI:28938"/>
        <dbReference type="ChEBI" id="CHEBI:29985"/>
        <dbReference type="ChEBI" id="CHEBI:58359"/>
    </reaction>
</comment>
<comment type="catalytic activity">
    <reaction evidence="1">
        <text>UTP + NH4(+) + ATP = CTP + ADP + phosphate + 2 H(+)</text>
        <dbReference type="Rhea" id="RHEA:16597"/>
        <dbReference type="ChEBI" id="CHEBI:15378"/>
        <dbReference type="ChEBI" id="CHEBI:28938"/>
        <dbReference type="ChEBI" id="CHEBI:30616"/>
        <dbReference type="ChEBI" id="CHEBI:37563"/>
        <dbReference type="ChEBI" id="CHEBI:43474"/>
        <dbReference type="ChEBI" id="CHEBI:46398"/>
        <dbReference type="ChEBI" id="CHEBI:456216"/>
    </reaction>
</comment>
<comment type="activity regulation">
    <text evidence="1">Allosterically activated by GTP, when glutamine is the substrate; GTP has no effect on the reaction when ammonia is the substrate. The allosteric effector GTP functions by stabilizing the protein conformation that binds the tetrahedral intermediate(s) formed during glutamine hydrolysis. Inhibited by the product CTP, via allosteric rather than competitive inhibition.</text>
</comment>
<comment type="pathway">
    <text evidence="1">Pyrimidine metabolism; CTP biosynthesis via de novo pathway; CTP from UDP: step 2/2.</text>
</comment>
<comment type="subunit">
    <text evidence="1">Homotetramer.</text>
</comment>
<comment type="miscellaneous">
    <text evidence="1">CTPSs have evolved a hybrid strategy for distinguishing between UTP and CTP. The overlapping regions of the product feedback inhibitory and substrate sites recognize a common feature in both compounds, the triphosphate moiety. To differentiate isosteric substrate and product pyrimidine rings, an additional pocket far from the expected kinase/ligase catalytic site, specifically recognizes the cytosine and ribose portions of the product inhibitor.</text>
</comment>
<comment type="similarity">
    <text evidence="1">Belongs to the CTP synthase family.</text>
</comment>
<evidence type="ECO:0000255" key="1">
    <source>
        <dbReference type="HAMAP-Rule" id="MF_01227"/>
    </source>
</evidence>
<name>PYRG_RHILW</name>
<reference key="1">
    <citation type="journal article" date="2010" name="Stand. Genomic Sci.">
        <title>Complete genome sequence of Rhizobium leguminosarum bv trifolii strain WSM2304, an effective microsymbiont of the South American clover Trifolium polymorphum.</title>
        <authorList>
            <person name="Reeve W."/>
            <person name="O'Hara G."/>
            <person name="Chain P."/>
            <person name="Ardley J."/>
            <person name="Brau L."/>
            <person name="Nandesena K."/>
            <person name="Tiwari R."/>
            <person name="Malfatti S."/>
            <person name="Kiss H."/>
            <person name="Lapidus A."/>
            <person name="Copeland A."/>
            <person name="Nolan M."/>
            <person name="Land M."/>
            <person name="Ivanova N."/>
            <person name="Mavromatis K."/>
            <person name="Markowitz V."/>
            <person name="Kyrpides N."/>
            <person name="Melino V."/>
            <person name="Denton M."/>
            <person name="Yates R."/>
            <person name="Howieson J."/>
        </authorList>
    </citation>
    <scope>NUCLEOTIDE SEQUENCE [LARGE SCALE GENOMIC DNA]</scope>
    <source>
        <strain>WSM2304</strain>
    </source>
</reference>